<proteinExistence type="inferred from homology"/>
<reference key="1">
    <citation type="journal article" date="2006" name="J. Bacteriol.">
        <title>Pathogenomic sequence analysis of Bacillus cereus and Bacillus thuringiensis isolates closely related to Bacillus anthracis.</title>
        <authorList>
            <person name="Han C.S."/>
            <person name="Xie G."/>
            <person name="Challacombe J.F."/>
            <person name="Altherr M.R."/>
            <person name="Bhotika S.S."/>
            <person name="Bruce D."/>
            <person name="Campbell C.S."/>
            <person name="Campbell M.L."/>
            <person name="Chen J."/>
            <person name="Chertkov O."/>
            <person name="Cleland C."/>
            <person name="Dimitrijevic M."/>
            <person name="Doggett N.A."/>
            <person name="Fawcett J.J."/>
            <person name="Glavina T."/>
            <person name="Goodwin L.A."/>
            <person name="Hill K.K."/>
            <person name="Hitchcock P."/>
            <person name="Jackson P.J."/>
            <person name="Keim P."/>
            <person name="Kewalramani A.R."/>
            <person name="Longmire J."/>
            <person name="Lucas S."/>
            <person name="Malfatti S."/>
            <person name="McMurry K."/>
            <person name="Meincke L.J."/>
            <person name="Misra M."/>
            <person name="Moseman B.L."/>
            <person name="Mundt M."/>
            <person name="Munk A.C."/>
            <person name="Okinaka R.T."/>
            <person name="Parson-Quintana B."/>
            <person name="Reilly L.P."/>
            <person name="Richardson P."/>
            <person name="Robinson D.L."/>
            <person name="Rubin E."/>
            <person name="Saunders E."/>
            <person name="Tapia R."/>
            <person name="Tesmer J.G."/>
            <person name="Thayer N."/>
            <person name="Thompson L.S."/>
            <person name="Tice H."/>
            <person name="Ticknor L.O."/>
            <person name="Wills P.L."/>
            <person name="Brettin T.S."/>
            <person name="Gilna P."/>
        </authorList>
    </citation>
    <scope>NUCLEOTIDE SEQUENCE [LARGE SCALE GENOMIC DNA]</scope>
    <source>
        <strain>97-27</strain>
    </source>
</reference>
<accession>Q6HAX6</accession>
<evidence type="ECO:0000255" key="1">
    <source>
        <dbReference type="HAMAP-Rule" id="MF_01416"/>
    </source>
</evidence>
<gene>
    <name evidence="1" type="primary">atpH</name>
    <name type="ordered locus">BT9727_4991</name>
</gene>
<dbReference type="EMBL" id="AE017355">
    <property type="protein sequence ID" value="AAT62610.1"/>
    <property type="molecule type" value="Genomic_DNA"/>
</dbReference>
<dbReference type="RefSeq" id="WP_000064678.1">
    <property type="nucleotide sequence ID" value="NC_005957.1"/>
</dbReference>
<dbReference type="RefSeq" id="YP_039300.1">
    <property type="nucleotide sequence ID" value="NC_005957.1"/>
</dbReference>
<dbReference type="SMR" id="Q6HAX6"/>
<dbReference type="GeneID" id="45025138"/>
<dbReference type="KEGG" id="btk:BT9727_4991"/>
<dbReference type="PATRIC" id="fig|281309.8.peg.5308"/>
<dbReference type="HOGENOM" id="CLU_085114_4_1_9"/>
<dbReference type="Proteomes" id="UP000001301">
    <property type="component" value="Chromosome"/>
</dbReference>
<dbReference type="GO" id="GO:0005886">
    <property type="term" value="C:plasma membrane"/>
    <property type="evidence" value="ECO:0007669"/>
    <property type="project" value="UniProtKB-SubCell"/>
</dbReference>
<dbReference type="GO" id="GO:0045259">
    <property type="term" value="C:proton-transporting ATP synthase complex"/>
    <property type="evidence" value="ECO:0007669"/>
    <property type="project" value="UniProtKB-KW"/>
</dbReference>
<dbReference type="GO" id="GO:0046933">
    <property type="term" value="F:proton-transporting ATP synthase activity, rotational mechanism"/>
    <property type="evidence" value="ECO:0007669"/>
    <property type="project" value="UniProtKB-UniRule"/>
</dbReference>
<dbReference type="Gene3D" id="1.10.520.20">
    <property type="entry name" value="N-terminal domain of the delta subunit of the F1F0-ATP synthase"/>
    <property type="match status" value="1"/>
</dbReference>
<dbReference type="HAMAP" id="MF_01416">
    <property type="entry name" value="ATP_synth_delta_bact"/>
    <property type="match status" value="1"/>
</dbReference>
<dbReference type="InterPro" id="IPR026015">
    <property type="entry name" value="ATP_synth_OSCP/delta_N_sf"/>
</dbReference>
<dbReference type="InterPro" id="IPR020781">
    <property type="entry name" value="ATPase_OSCP/d_CS"/>
</dbReference>
<dbReference type="InterPro" id="IPR000711">
    <property type="entry name" value="ATPase_OSCP/dsu"/>
</dbReference>
<dbReference type="NCBIfam" id="TIGR01145">
    <property type="entry name" value="ATP_synt_delta"/>
    <property type="match status" value="1"/>
</dbReference>
<dbReference type="NCBIfam" id="NF004402">
    <property type="entry name" value="PRK05758.2-2"/>
    <property type="match status" value="1"/>
</dbReference>
<dbReference type="NCBIfam" id="NF004403">
    <property type="entry name" value="PRK05758.2-4"/>
    <property type="match status" value="1"/>
</dbReference>
<dbReference type="PANTHER" id="PTHR11910">
    <property type="entry name" value="ATP SYNTHASE DELTA CHAIN"/>
    <property type="match status" value="1"/>
</dbReference>
<dbReference type="Pfam" id="PF00213">
    <property type="entry name" value="OSCP"/>
    <property type="match status" value="1"/>
</dbReference>
<dbReference type="PRINTS" id="PR00125">
    <property type="entry name" value="ATPASEDELTA"/>
</dbReference>
<dbReference type="SUPFAM" id="SSF47928">
    <property type="entry name" value="N-terminal domain of the delta subunit of the F1F0-ATP synthase"/>
    <property type="match status" value="1"/>
</dbReference>
<dbReference type="PROSITE" id="PS00389">
    <property type="entry name" value="ATPASE_DELTA"/>
    <property type="match status" value="1"/>
</dbReference>
<feature type="chain" id="PRO_0000370894" description="ATP synthase subunit delta">
    <location>
        <begin position="1"/>
        <end position="180"/>
    </location>
</feature>
<name>ATPD_BACHK</name>
<sequence>MSNGIVAKRYAVALFKIAKEKHVLEMFEEELRLVQNVYEKNGELHSFLTQPNISKEQKKTFLANVFGSVSESILNTLYILIDNKRIDILSDIANEYVVLANEERNVADATVYSTRLLSEEEKLNIAEAFAKRTGKDAIRVKNVVDEDLLGGIKVRIGNRIYDGSLQGKLARIQRELMKNR</sequence>
<organism>
    <name type="scientific">Bacillus thuringiensis subsp. konkukian (strain 97-27)</name>
    <dbReference type="NCBI Taxonomy" id="281309"/>
    <lineage>
        <taxon>Bacteria</taxon>
        <taxon>Bacillati</taxon>
        <taxon>Bacillota</taxon>
        <taxon>Bacilli</taxon>
        <taxon>Bacillales</taxon>
        <taxon>Bacillaceae</taxon>
        <taxon>Bacillus</taxon>
        <taxon>Bacillus cereus group</taxon>
    </lineage>
</organism>
<keyword id="KW-0066">ATP synthesis</keyword>
<keyword id="KW-1003">Cell membrane</keyword>
<keyword id="KW-0139">CF(1)</keyword>
<keyword id="KW-0375">Hydrogen ion transport</keyword>
<keyword id="KW-0406">Ion transport</keyword>
<keyword id="KW-0472">Membrane</keyword>
<keyword id="KW-0813">Transport</keyword>
<protein>
    <recommendedName>
        <fullName evidence="1">ATP synthase subunit delta</fullName>
    </recommendedName>
    <alternativeName>
        <fullName evidence="1">ATP synthase F(1) sector subunit delta</fullName>
    </alternativeName>
    <alternativeName>
        <fullName evidence="1">F-type ATPase subunit delta</fullName>
        <shortName evidence="1">F-ATPase subunit delta</shortName>
    </alternativeName>
</protein>
<comment type="function">
    <text evidence="1">F(1)F(0) ATP synthase produces ATP from ADP in the presence of a proton or sodium gradient. F-type ATPases consist of two structural domains, F(1) containing the extramembraneous catalytic core and F(0) containing the membrane proton channel, linked together by a central stalk and a peripheral stalk. During catalysis, ATP synthesis in the catalytic domain of F(1) is coupled via a rotary mechanism of the central stalk subunits to proton translocation.</text>
</comment>
<comment type="function">
    <text evidence="1">This protein is part of the stalk that links CF(0) to CF(1). It either transmits conformational changes from CF(0) to CF(1) or is implicated in proton conduction.</text>
</comment>
<comment type="subunit">
    <text evidence="1">F-type ATPases have 2 components, F(1) - the catalytic core - and F(0) - the membrane proton channel. F(1) has five subunits: alpha(3), beta(3), gamma(1), delta(1), epsilon(1). F(0) has three main subunits: a(1), b(2) and c(10-14). The alpha and beta chains form an alternating ring which encloses part of the gamma chain. F(1) is attached to F(0) by a central stalk formed by the gamma and epsilon chains, while a peripheral stalk is formed by the delta and b chains.</text>
</comment>
<comment type="subcellular location">
    <subcellularLocation>
        <location evidence="1">Cell membrane</location>
        <topology evidence="1">Peripheral membrane protein</topology>
    </subcellularLocation>
</comment>
<comment type="similarity">
    <text evidence="1">Belongs to the ATPase delta chain family.</text>
</comment>